<accession>C5BU64</accession>
<keyword id="KW-0067">ATP-binding</keyword>
<keyword id="KW-0418">Kinase</keyword>
<keyword id="KW-0545">Nucleotide biosynthesis</keyword>
<keyword id="KW-0547">Nucleotide-binding</keyword>
<keyword id="KW-1185">Reference proteome</keyword>
<keyword id="KW-0808">Transferase</keyword>
<feature type="chain" id="PRO_1000203629" description="Thymidylate kinase">
    <location>
        <begin position="1"/>
        <end position="205"/>
    </location>
</feature>
<feature type="binding site" evidence="1">
    <location>
        <begin position="10"/>
        <end position="17"/>
    </location>
    <ligand>
        <name>ATP</name>
        <dbReference type="ChEBI" id="CHEBI:30616"/>
    </ligand>
</feature>
<proteinExistence type="inferred from homology"/>
<comment type="function">
    <text evidence="1">Phosphorylation of dTMP to form dTDP in both de novo and salvage pathways of dTTP synthesis.</text>
</comment>
<comment type="catalytic activity">
    <reaction evidence="1">
        <text>dTMP + ATP = dTDP + ADP</text>
        <dbReference type="Rhea" id="RHEA:13517"/>
        <dbReference type="ChEBI" id="CHEBI:30616"/>
        <dbReference type="ChEBI" id="CHEBI:58369"/>
        <dbReference type="ChEBI" id="CHEBI:63528"/>
        <dbReference type="ChEBI" id="CHEBI:456216"/>
        <dbReference type="EC" id="2.7.4.9"/>
    </reaction>
</comment>
<comment type="similarity">
    <text evidence="1">Belongs to the thymidylate kinase family.</text>
</comment>
<evidence type="ECO:0000255" key="1">
    <source>
        <dbReference type="HAMAP-Rule" id="MF_00165"/>
    </source>
</evidence>
<reference key="1">
    <citation type="journal article" date="2009" name="PLoS ONE">
        <title>The complete genome of Teredinibacter turnerae T7901: an intracellular endosymbiont of marine wood-boring bivalves (shipworms).</title>
        <authorList>
            <person name="Yang J.C."/>
            <person name="Madupu R."/>
            <person name="Durkin A.S."/>
            <person name="Ekborg N.A."/>
            <person name="Pedamallu C.S."/>
            <person name="Hostetler J.B."/>
            <person name="Radune D."/>
            <person name="Toms B.S."/>
            <person name="Henrissat B."/>
            <person name="Coutinho P.M."/>
            <person name="Schwarz S."/>
            <person name="Field L."/>
            <person name="Trindade-Silva A.E."/>
            <person name="Soares C.A.G."/>
            <person name="Elshahawi S."/>
            <person name="Hanora A."/>
            <person name="Schmidt E.W."/>
            <person name="Haygood M.G."/>
            <person name="Posfai J."/>
            <person name="Benner J."/>
            <person name="Madinger C."/>
            <person name="Nove J."/>
            <person name="Anton B."/>
            <person name="Chaudhary K."/>
            <person name="Foster J."/>
            <person name="Holman A."/>
            <person name="Kumar S."/>
            <person name="Lessard P.A."/>
            <person name="Luyten Y.A."/>
            <person name="Slatko B."/>
            <person name="Wood N."/>
            <person name="Wu B."/>
            <person name="Teplitski M."/>
            <person name="Mougous J.D."/>
            <person name="Ward N."/>
            <person name="Eisen J.A."/>
            <person name="Badger J.H."/>
            <person name="Distel D.L."/>
        </authorList>
    </citation>
    <scope>NUCLEOTIDE SEQUENCE [LARGE SCALE GENOMIC DNA]</scope>
    <source>
        <strain>ATCC 39867 / T7901</strain>
    </source>
</reference>
<dbReference type="EC" id="2.7.4.9" evidence="1"/>
<dbReference type="EMBL" id="CP001614">
    <property type="protein sequence ID" value="ACR12683.1"/>
    <property type="molecule type" value="Genomic_DNA"/>
</dbReference>
<dbReference type="RefSeq" id="WP_015818795.1">
    <property type="nucleotide sequence ID" value="NC_012997.1"/>
</dbReference>
<dbReference type="SMR" id="C5BU64"/>
<dbReference type="STRING" id="377629.TERTU_1725"/>
<dbReference type="KEGG" id="ttu:TERTU_1725"/>
<dbReference type="eggNOG" id="COG0125">
    <property type="taxonomic scope" value="Bacteria"/>
</dbReference>
<dbReference type="HOGENOM" id="CLU_049131_0_2_6"/>
<dbReference type="OrthoDB" id="9774907at2"/>
<dbReference type="Proteomes" id="UP000009080">
    <property type="component" value="Chromosome"/>
</dbReference>
<dbReference type="GO" id="GO:0005829">
    <property type="term" value="C:cytosol"/>
    <property type="evidence" value="ECO:0007669"/>
    <property type="project" value="TreeGrafter"/>
</dbReference>
<dbReference type="GO" id="GO:0005524">
    <property type="term" value="F:ATP binding"/>
    <property type="evidence" value="ECO:0007669"/>
    <property type="project" value="UniProtKB-UniRule"/>
</dbReference>
<dbReference type="GO" id="GO:0004798">
    <property type="term" value="F:dTMP kinase activity"/>
    <property type="evidence" value="ECO:0007669"/>
    <property type="project" value="UniProtKB-UniRule"/>
</dbReference>
<dbReference type="GO" id="GO:0006233">
    <property type="term" value="P:dTDP biosynthetic process"/>
    <property type="evidence" value="ECO:0007669"/>
    <property type="project" value="InterPro"/>
</dbReference>
<dbReference type="GO" id="GO:0006235">
    <property type="term" value="P:dTTP biosynthetic process"/>
    <property type="evidence" value="ECO:0007669"/>
    <property type="project" value="UniProtKB-UniRule"/>
</dbReference>
<dbReference type="GO" id="GO:0006227">
    <property type="term" value="P:dUDP biosynthetic process"/>
    <property type="evidence" value="ECO:0007669"/>
    <property type="project" value="TreeGrafter"/>
</dbReference>
<dbReference type="CDD" id="cd01672">
    <property type="entry name" value="TMPK"/>
    <property type="match status" value="1"/>
</dbReference>
<dbReference type="FunFam" id="3.40.50.300:FF:000225">
    <property type="entry name" value="Thymidylate kinase"/>
    <property type="match status" value="1"/>
</dbReference>
<dbReference type="Gene3D" id="3.40.50.300">
    <property type="entry name" value="P-loop containing nucleotide triphosphate hydrolases"/>
    <property type="match status" value="1"/>
</dbReference>
<dbReference type="HAMAP" id="MF_00165">
    <property type="entry name" value="Thymidylate_kinase"/>
    <property type="match status" value="1"/>
</dbReference>
<dbReference type="InterPro" id="IPR027417">
    <property type="entry name" value="P-loop_NTPase"/>
</dbReference>
<dbReference type="InterPro" id="IPR039430">
    <property type="entry name" value="Thymidylate_kin-like_dom"/>
</dbReference>
<dbReference type="InterPro" id="IPR018094">
    <property type="entry name" value="Thymidylate_kinase"/>
</dbReference>
<dbReference type="NCBIfam" id="TIGR00041">
    <property type="entry name" value="DTMP_kinase"/>
    <property type="match status" value="1"/>
</dbReference>
<dbReference type="PANTHER" id="PTHR10344">
    <property type="entry name" value="THYMIDYLATE KINASE"/>
    <property type="match status" value="1"/>
</dbReference>
<dbReference type="PANTHER" id="PTHR10344:SF4">
    <property type="entry name" value="UMP-CMP KINASE 2, MITOCHONDRIAL"/>
    <property type="match status" value="1"/>
</dbReference>
<dbReference type="Pfam" id="PF02223">
    <property type="entry name" value="Thymidylate_kin"/>
    <property type="match status" value="1"/>
</dbReference>
<dbReference type="SUPFAM" id="SSF52540">
    <property type="entry name" value="P-loop containing nucleoside triphosphate hydrolases"/>
    <property type="match status" value="1"/>
</dbReference>
<organism>
    <name type="scientific">Teredinibacter turnerae (strain ATCC 39867 / T7901)</name>
    <dbReference type="NCBI Taxonomy" id="377629"/>
    <lineage>
        <taxon>Bacteria</taxon>
        <taxon>Pseudomonadati</taxon>
        <taxon>Pseudomonadota</taxon>
        <taxon>Gammaproteobacteria</taxon>
        <taxon>Cellvibrionales</taxon>
        <taxon>Cellvibrionaceae</taxon>
        <taxon>Teredinibacter</taxon>
    </lineage>
</organism>
<sequence length="205" mass="22827">MTGRFITVEGTEGVGKSTNLAFIEGFLRSRAIDVITTREPGGTPLAEELRELLLAKREEPVDACAELLMVFAARAQHLNQLVAPALARGQWVLCDRFTDATYAYQGAGRGLSLETISKLEFLVQGSLQPDITVWLDIDVRLGLERARARADLDRFEEEDVSFFERVRAGYRARAEEAPARFCRINAGQPLAQVQTDIQRALEAFL</sequence>
<protein>
    <recommendedName>
        <fullName evidence="1">Thymidylate kinase</fullName>
        <ecNumber evidence="1">2.7.4.9</ecNumber>
    </recommendedName>
    <alternativeName>
        <fullName evidence="1">dTMP kinase</fullName>
    </alternativeName>
</protein>
<gene>
    <name evidence="1" type="primary">tmk</name>
    <name type="ordered locus">TERTU_1725</name>
</gene>
<name>KTHY_TERTT</name>